<feature type="signal peptide" evidence="6 22">
    <location>
        <begin position="1"/>
        <end position="18"/>
    </location>
</feature>
<feature type="chain" id="PRO_0000005408" description="Chromogranin-A">
    <location>
        <begin position="19"/>
        <end position="457"/>
    </location>
</feature>
<feature type="peptide" id="PRO_0000005409" description="Vasostatin-2" evidence="6">
    <location>
        <begin position="19"/>
        <end position="131"/>
    </location>
</feature>
<feature type="peptide" id="PRO_0000005410" description="Vasostatin-1" evidence="6">
    <location>
        <begin position="19"/>
        <end position="94"/>
    </location>
</feature>
<feature type="peptide" id="PRO_0000005411" description="EA-92" evidence="6">
    <location>
        <begin position="134"/>
        <end position="225"/>
    </location>
</feature>
<feature type="peptide" id="PRO_0000005412" description="ES-43" evidence="6">
    <location>
        <begin position="228"/>
        <end position="260"/>
    </location>
</feature>
<feature type="peptide" id="PRO_0000005413" description="Pancreastatin" evidence="6">
    <location>
        <begin position="272"/>
        <end position="319"/>
    </location>
</feature>
<feature type="peptide" id="PRO_0000005414" description="SS-18" evidence="6">
    <location>
        <begin position="322"/>
        <end position="339"/>
    </location>
</feature>
<feature type="peptide" id="PRO_0000005415" description="WE-14" evidence="6">
    <location>
        <begin position="342"/>
        <end position="355"/>
    </location>
</feature>
<feature type="peptide" id="PRO_0000005416" description="WA-8" evidence="6">
    <location>
        <begin position="342"/>
        <end position="349"/>
    </location>
</feature>
<feature type="peptide" id="PRO_0000005417" description="LF-19" evidence="6">
    <location>
        <begin position="358"/>
        <end position="376"/>
    </location>
</feature>
<feature type="peptide" id="PRO_0000432682" description="Catestatin" evidence="5">
    <location>
        <begin position="370"/>
        <end position="390"/>
    </location>
</feature>
<feature type="peptide" id="PRO_0000005418" description="AL-11" evidence="6">
    <location>
        <begin position="380"/>
        <end position="390"/>
    </location>
</feature>
<feature type="peptide" id="PRO_0000432683" description="GE-25" evidence="32">
    <location>
        <begin position="393"/>
        <end position="417"/>
    </location>
</feature>
<feature type="peptide" id="PRO_0000005419" description="GV-19" evidence="6">
    <location>
        <begin position="393"/>
        <end position="411"/>
    </location>
</feature>
<feature type="peptide" id="PRO_0000005420" description="GR-44" evidence="6">
    <location>
        <begin position="413"/>
        <end position="456"/>
    </location>
</feature>
<feature type="peptide" id="PRO_0000005421" description="ER-37" evidence="6">
    <location>
        <begin position="420"/>
        <end position="456"/>
    </location>
</feature>
<feature type="peptide" id="PRO_0000432684" description="Serpinin-RRG" evidence="2">
    <location>
        <begin position="429"/>
        <end position="457"/>
    </location>
</feature>
<feature type="peptide" id="PRO_0000432685" description="Serpinin" evidence="3">
    <location>
        <begin position="429"/>
        <end position="454"/>
    </location>
</feature>
<feature type="peptide" id="PRO_0000432686" description="p-Glu serpinin precursor" evidence="3">
    <location>
        <begin position="432"/>
        <end position="454"/>
    </location>
</feature>
<feature type="region of interest" description="O-glycosylated at one site only in cerebrospinal fluid">
    <location>
        <begin position="41"/>
        <end position="59"/>
    </location>
</feature>
<feature type="region of interest" description="Disordered" evidence="4">
    <location>
        <begin position="88"/>
        <end position="440"/>
    </location>
</feature>
<feature type="region of interest" description="O-glycosylated at one site only in cerebrospinal fluid">
    <location>
        <begin position="181"/>
        <end position="191"/>
    </location>
</feature>
<feature type="compositionally biased region" description="Basic and acidic residues" evidence="4">
    <location>
        <begin position="116"/>
        <end position="144"/>
    </location>
</feature>
<feature type="compositionally biased region" description="Acidic residues" evidence="4">
    <location>
        <begin position="171"/>
        <end position="180"/>
    </location>
</feature>
<feature type="compositionally biased region" description="Polar residues" evidence="4">
    <location>
        <begin position="182"/>
        <end position="191"/>
    </location>
</feature>
<feature type="compositionally biased region" description="Acidic residues" evidence="4">
    <location>
        <begin position="229"/>
        <end position="249"/>
    </location>
</feature>
<feature type="compositionally biased region" description="Basic and acidic residues" evidence="4">
    <location>
        <begin position="263"/>
        <end position="272"/>
    </location>
</feature>
<feature type="compositionally biased region" description="Basic and acidic residues" evidence="4">
    <location>
        <begin position="291"/>
        <end position="303"/>
    </location>
</feature>
<feature type="compositionally biased region" description="Basic and acidic residues" evidence="4">
    <location>
        <begin position="330"/>
        <end position="360"/>
    </location>
</feature>
<feature type="compositionally biased region" description="Basic and acidic residues" evidence="4">
    <location>
        <begin position="414"/>
        <end position="431"/>
    </location>
</feature>
<feature type="modified residue" description="Phosphoserine" evidence="1">
    <location>
        <position position="142"/>
    </location>
</feature>
<feature type="modified residue" description="Phosphotyrosine" evidence="1">
    <location>
        <position position="194"/>
    </location>
</feature>
<feature type="modified residue" description="Phosphoserine" evidence="34">
    <location>
        <position position="203"/>
    </location>
</feature>
<feature type="modified residue" description="Phosphoserine" evidence="26">
    <location>
        <position position="218"/>
    </location>
</feature>
<feature type="modified residue" description="Phosphoserine" evidence="26">
    <location>
        <position position="270"/>
    </location>
</feature>
<feature type="modified residue" description="Phosphoserine" evidence="34">
    <location>
        <position position="300"/>
    </location>
</feature>
<feature type="modified residue" description="Glycine amide" evidence="16 21">
    <location>
        <position position="319"/>
    </location>
</feature>
<feature type="modified residue" description="Phosphoserine" evidence="9 34 35">
    <location>
        <position position="322"/>
    </location>
</feature>
<feature type="modified residue" description="Phosphoserine" evidence="26">
    <location>
        <position position="333"/>
    </location>
</feature>
<feature type="modified residue" description="Phosphoserine" evidence="2">
    <location>
        <position position="371"/>
    </location>
</feature>
<feature type="modified residue" description="Methionine sulfoxide" evidence="13">
    <location>
        <position position="372"/>
    </location>
</feature>
<feature type="modified residue" description="Phosphoserine" evidence="1">
    <location>
        <position position="398"/>
    </location>
</feature>
<feature type="modified residue" description="Phosphoserine" evidence="34">
    <location>
        <position position="402"/>
    </location>
</feature>
<feature type="modified residue" description="Phosphoserine" evidence="2">
    <location>
        <position position="424"/>
    </location>
</feature>
<feature type="modified residue" description="Phosphoserine" evidence="2">
    <location>
        <position position="438"/>
    </location>
</feature>
<feature type="modified residue" description="Arginine amide" evidence="6">
    <location>
        <position position="456"/>
    </location>
</feature>
<feature type="glycosylation site" id="CAR_000116" description="O-linked (GalNAc...) threonine" evidence="26">
    <location>
        <position position="181"/>
    </location>
</feature>
<feature type="glycosylation site" id="CAR_000117" description="O-linked (GalNAc...) threonine" evidence="26">
    <location>
        <position position="183"/>
    </location>
</feature>
<feature type="glycosylation site" id="CAR_000118" description="O-linked (GalNAc...) threonine" evidence="26">
    <location>
        <position position="251"/>
    </location>
</feature>
<feature type="glycosylation site" description="O-linked (Xyl...) (chondroitin sulfate) serine" evidence="20 23">
    <location>
        <position position="424"/>
    </location>
</feature>
<feature type="disulfide bond" evidence="18">
    <location>
        <begin position="35"/>
        <end position="56"/>
    </location>
</feature>
<feature type="sequence variant" id="VAR_047417" description="In dbSNP:rs3742712.">
    <original>R</original>
    <variation>Q</variation>
    <location>
        <position position="61"/>
    </location>
</feature>
<feature type="sequence variant" id="VAR_025636" description="In dbSNP:rs9658654.">
    <original>E</original>
    <variation>K</variation>
    <location>
        <position position="176"/>
    </location>
</feature>
<feature type="sequence variant" id="VAR_025637" description="In dbSNP:rs9658655." evidence="27">
    <original>E</original>
    <variation>D</variation>
    <location>
        <position position="264"/>
    </location>
</feature>
<feature type="sequence variant" id="VAR_025638" description="In dbSNP:rs9658662.">
    <original>R</original>
    <variation>W</variation>
    <location>
        <position position="271"/>
    </location>
</feature>
<feature type="sequence variant" id="VAR_025639" description="In dbSNP:rs9658663.">
    <original>A</original>
    <variation>G</variation>
    <location>
        <position position="274"/>
    </location>
</feature>
<feature type="sequence variant" id="VAR_025640" description="In dbSNP:rs9658664.">
    <original>G</original>
    <variation>S</variation>
    <location>
        <position position="315"/>
    </location>
</feature>
<feature type="sequence variant" id="VAR_025641" description="In dbSNP:rs9658665.">
    <original>L</original>
    <variation>P</variation>
    <location>
        <position position="332"/>
    </location>
</feature>
<feature type="sequence variant" id="VAR_025642" description="In dbSNP:rs2228575.">
    <original>D</original>
    <variation>N</variation>
    <location>
        <position position="369"/>
    </location>
</feature>
<feature type="sequence variant" id="VAR_025643" description="Probable protective factor against hypertension; reduces activity 4.7 fold; no effect on plasmin-mediated proteolytic processing; increase in ability to inhibit nicotine-evoked catecholamine secretion in vitro; displays alterations in baroreceptor function; dbSNP:rs9658667." evidence="8 10 12 13">
    <original>G</original>
    <variation>S</variation>
    <location>
        <position position="382"/>
    </location>
</feature>
<feature type="sequence variant" id="VAR_025644" description="Increases activity 2.3 fold; decrease in plasmin-mediated proteolytic processing; decrease in ability to inhibit nicotine-evoked catecholamine secretion in vitro; dbSNP:rs9658668." evidence="8 10 13">
    <original>P</original>
    <variation>L</variation>
    <location>
        <position position="388"/>
    </location>
</feature>
<feature type="sequence variant" id="VAR_072687" description="No effect on plasmin-mediated proteolytic processing; decrease in ability to inhibit nicotine-evoked catecholamine secretion in vitro; dbSNP:rs9658669." evidence="10 13">
    <original>R</original>
    <variation>Q</variation>
    <location>
        <position position="392"/>
    </location>
</feature>
<feature type="sequence variant" id="VAR_025645" description="In dbSNP:rs729940." evidence="7 18 25">
    <original>R</original>
    <variation>W</variation>
    <location>
        <position position="399"/>
    </location>
</feature>
<feature type="sequence conflict" description="In Ref. 1; AAA52018." evidence="33" ref="1">
    <original>S</original>
    <variation>Y</variation>
    <location>
        <position position="41"/>
    </location>
</feature>
<feature type="sequence conflict" description="In Ref. 1; AAA52018." evidence="33" ref="1">
    <original>Q</original>
    <variation>K</variation>
    <location>
        <position position="54"/>
    </location>
</feature>
<feature type="sequence conflict" description="In Ref. 1; AAA52018." evidence="33" ref="1">
    <original>A</original>
    <variation>R</variation>
    <location>
        <position position="87"/>
    </location>
</feature>
<feature type="sequence conflict" description="In Ref. 1; AAA52018." evidence="33" ref="1">
    <original>E</original>
    <variation>Q</variation>
    <location>
        <position position="119"/>
    </location>
</feature>
<feature type="sequence conflict" description="In Ref. 1; AAA52018." evidence="33" ref="1">
    <original>N</original>
    <variation>K</variation>
    <location>
        <position position="167"/>
    </location>
</feature>
<feature type="sequence conflict" description="In Ref. 1; AAA52018." evidence="33" ref="1">
    <original>E</original>
    <variation>K</variation>
    <location>
        <position position="200"/>
    </location>
</feature>
<feature type="sequence conflict" description="In Ref. 1; AAA52018." evidence="33" ref="1">
    <original>A</original>
    <variation>V</variation>
    <location>
        <position position="219"/>
    </location>
</feature>
<feature type="sequence conflict" description="In Ref. 1; AAA52018." evidence="33" ref="1">
    <original>SK</original>
    <variation>TN</variation>
    <location>
        <begin position="339"/>
        <end position="340"/>
    </location>
</feature>
<feature type="sequence conflict" description="In Ref. 1; AAA52018." evidence="33" ref="1">
    <original>S</original>
    <variation>R</variation>
    <location>
        <position position="370"/>
    </location>
</feature>
<feature type="sequence conflict" description="In Ref. 1; AAA52018." evidence="33" ref="1">
    <original>K</original>
    <variation>R</variation>
    <location>
        <position position="373"/>
    </location>
</feature>
<feature type="sequence conflict" description="In Ref. 1; AAA52018." evidence="33" ref="1">
    <original>A</original>
    <variation>G</variation>
    <location>
        <position position="380"/>
    </location>
</feature>
<feature type="sequence conflict" description="In Ref. 1; AAA52018." evidence="33" ref="1">
    <original>W</original>
    <variation>S</variation>
    <location>
        <position position="394"/>
    </location>
</feature>
<feature type="sequence conflict" description="In Ref. 1; AAA52018." evidence="33" ref="1">
    <original>S</original>
    <variation>N</variation>
    <location>
        <position position="397"/>
    </location>
</feature>
<feature type="sequence conflict" description="In Ref. 1; AAA52018." evidence="33" ref="1">
    <original>E</original>
    <variation>Q</variation>
    <location>
        <position position="416"/>
    </location>
</feature>
<feature type="helix" evidence="37">
    <location>
        <begin position="63"/>
        <end position="76"/>
    </location>
</feature>
<feature type="strand" evidence="36">
    <location>
        <begin position="380"/>
        <end position="383"/>
    </location>
</feature>
<feature type="strand" evidence="36">
    <location>
        <begin position="385"/>
        <end position="387"/>
    </location>
</feature>
<sequence>MRSAAVLALLLCAGQVTALPVNSPMNKGDTEVMKCIVEVISDTLSKPSPMPVSQECFETLRGDERILSILRHQNLLKELQDLALQGAKERAHQQKKHSGFEDELSEVLENQSSQAELKEAVEEPSSKDVMEKREDSKEAEKSGEATDGARPQALPEPMQESKAEGNNQAPGEEEEEEEEATNTHPPASLPSQKYPGPQAEGDSEGLSQGLVDREKGLSAEPGWQAKREEEEEEEEEAEAGEEAVPEEEGPTVVLNPHPSLGYKEIRKGESRSEALAVDGAGKPGAEEAQDPEGKGEQEHSQQKEEEEEMAVVPQGLFRGGKSGELEQEEERLSKEWEDSKRWSKMDQLAKELTAEKRLEGQEEEEDNRDSSMKLSFRARAYGFRGPGPQLRRGWRPSSREDSLEAGLPLQVRGYPEEKKEEEGSANRRPEDQELESLSAIEAELEKVAHQLQALRRG</sequence>
<protein>
    <recommendedName>
        <fullName>Chromogranin-A</fullName>
        <shortName>CgA</shortName>
    </recommendedName>
    <alternativeName>
        <fullName>Pituitary secretory protein I</fullName>
        <shortName>SP-I</shortName>
    </alternativeName>
    <component>
        <recommendedName>
            <fullName>Vasostatin-1</fullName>
        </recommendedName>
        <alternativeName>
            <fullName>Vasostatin I</fullName>
        </alternativeName>
    </component>
    <component>
        <recommendedName>
            <fullName>Vasostatin-2</fullName>
        </recommendedName>
        <alternativeName>
            <fullName>Vasostatin II</fullName>
        </alternativeName>
    </component>
    <component>
        <recommendedName>
            <fullName>EA-92</fullName>
        </recommendedName>
    </component>
    <component>
        <recommendedName>
            <fullName>ES-43</fullName>
        </recommendedName>
    </component>
    <component>
        <recommendedName>
            <fullName>Pancreastatin</fullName>
        </recommendedName>
    </component>
    <component>
        <recommendedName>
            <fullName>SS-18</fullName>
        </recommendedName>
    </component>
    <component>
        <recommendedName>
            <fullName>WA-8</fullName>
        </recommendedName>
    </component>
    <component>
        <recommendedName>
            <fullName>WE-14</fullName>
        </recommendedName>
    </component>
    <component>
        <recommendedName>
            <fullName>LF-19</fullName>
        </recommendedName>
    </component>
    <component>
        <recommendedName>
            <fullName evidence="28 29">Catestatin</fullName>
        </recommendedName>
        <alternativeName>
            <fullName evidence="31">SL21</fullName>
        </alternativeName>
    </component>
    <component>
        <recommendedName>
            <fullName>AL-11</fullName>
        </recommendedName>
    </component>
    <component>
        <recommendedName>
            <fullName>GV-19</fullName>
        </recommendedName>
    </component>
    <component>
        <recommendedName>
            <fullName>GR-44</fullName>
        </recommendedName>
    </component>
    <component>
        <recommendedName>
            <fullName>ER-37</fullName>
        </recommendedName>
    </component>
    <component>
        <recommendedName>
            <fullName evidence="32">GE-25</fullName>
        </recommendedName>
    </component>
    <component>
        <recommendedName>
            <fullName>Serpinin-RRG</fullName>
        </recommendedName>
    </component>
    <component>
        <recommendedName>
            <fullName>Serpinin</fullName>
        </recommendedName>
    </component>
    <component>
        <recommendedName>
            <fullName>p-Glu serpinin precursor</fullName>
        </recommendedName>
    </component>
</protein>
<evidence type="ECO:0000250" key="1">
    <source>
        <dbReference type="UniProtKB" id="P05059"/>
    </source>
</evidence>
<evidence type="ECO:0000250" key="2">
    <source>
        <dbReference type="UniProtKB" id="P10354"/>
    </source>
</evidence>
<evidence type="ECO:0000250" key="3">
    <source>
        <dbReference type="UniProtKB" id="P26339"/>
    </source>
</evidence>
<evidence type="ECO:0000256" key="4">
    <source>
        <dbReference type="SAM" id="MobiDB-lite"/>
    </source>
</evidence>
<evidence type="ECO:0000269" key="5">
    <source>
    </source>
</evidence>
<evidence type="ECO:0000269" key="6">
    <source>
    </source>
</evidence>
<evidence type="ECO:0000269" key="7">
    <source>
    </source>
</evidence>
<evidence type="ECO:0000269" key="8">
    <source>
    </source>
</evidence>
<evidence type="ECO:0000269" key="9">
    <source>
    </source>
</evidence>
<evidence type="ECO:0000269" key="10">
    <source>
    </source>
</evidence>
<evidence type="ECO:0000269" key="11">
    <source>
    </source>
</evidence>
<evidence type="ECO:0000269" key="12">
    <source>
    </source>
</evidence>
<evidence type="ECO:0000269" key="13">
    <source>
    </source>
</evidence>
<evidence type="ECO:0000269" key="14">
    <source>
    </source>
</evidence>
<evidence type="ECO:0000269" key="15">
    <source>
    </source>
</evidence>
<evidence type="ECO:0000269" key="16">
    <source>
    </source>
</evidence>
<evidence type="ECO:0000269" key="17">
    <source>
    </source>
</evidence>
<evidence type="ECO:0000269" key="18">
    <source>
    </source>
</evidence>
<evidence type="ECO:0000269" key="19">
    <source>
    </source>
</evidence>
<evidence type="ECO:0000269" key="20">
    <source>
    </source>
</evidence>
<evidence type="ECO:0000269" key="21">
    <source>
    </source>
</evidence>
<evidence type="ECO:0000269" key="22">
    <source>
    </source>
</evidence>
<evidence type="ECO:0000269" key="23">
    <source>
    </source>
</evidence>
<evidence type="ECO:0000269" key="24">
    <source>
    </source>
</evidence>
<evidence type="ECO:0000269" key="25">
    <source>
    </source>
</evidence>
<evidence type="ECO:0000269" key="26">
    <source>
    </source>
</evidence>
<evidence type="ECO:0000269" key="27">
    <source ref="7"/>
</evidence>
<evidence type="ECO:0000303" key="28">
    <source>
    </source>
</evidence>
<evidence type="ECO:0000303" key="29">
    <source>
    </source>
</evidence>
<evidence type="ECO:0000303" key="30">
    <source>
    </source>
</evidence>
<evidence type="ECO:0000303" key="31">
    <source>
    </source>
</evidence>
<evidence type="ECO:0000303" key="32">
    <source>
    </source>
</evidence>
<evidence type="ECO:0000305" key="33"/>
<evidence type="ECO:0007744" key="34">
    <source>
    </source>
</evidence>
<evidence type="ECO:0007744" key="35">
    <source>
    </source>
</evidence>
<evidence type="ECO:0007829" key="36">
    <source>
        <dbReference type="PDB" id="1LV4"/>
    </source>
</evidence>
<evidence type="ECO:0007829" key="37">
    <source>
        <dbReference type="PDB" id="6R2X"/>
    </source>
</evidence>
<keyword id="KW-0002">3D-structure</keyword>
<keyword id="KW-0027">Amidation</keyword>
<keyword id="KW-0044">Antibiotic</keyword>
<keyword id="KW-0929">Antimicrobial</keyword>
<keyword id="KW-0106">Calcium</keyword>
<keyword id="KW-0165">Cleavage on pair of basic residues</keyword>
<keyword id="KW-0968">Cytoplasmic vesicle</keyword>
<keyword id="KW-0903">Direct protein sequencing</keyword>
<keyword id="KW-1015">Disulfide bond</keyword>
<keyword id="KW-0295">Fungicide</keyword>
<keyword id="KW-0325">Glycoprotein</keyword>
<keyword id="KW-0558">Oxidation</keyword>
<keyword id="KW-0597">Phosphoprotein</keyword>
<keyword id="KW-0654">Proteoglycan</keyword>
<keyword id="KW-1267">Proteomics identification</keyword>
<keyword id="KW-1185">Reference proteome</keyword>
<keyword id="KW-0964">Secreted</keyword>
<keyword id="KW-0732">Signal</keyword>
<keyword id="KW-0765">Sulfation</keyword>
<reference key="1">
    <citation type="journal article" date="1987" name="J. Biol. Chem.">
        <title>The primary structure of human chromogranin A and pancreastatin.</title>
        <authorList>
            <person name="Konecki D.S."/>
            <person name="Benedum U.M."/>
            <person name="Gerdes H.-H."/>
            <person name="Huttner W.B."/>
        </authorList>
    </citation>
    <scope>NUCLEOTIDE SEQUENCE [MRNA]</scope>
    <scope>DISULFIDE BOND</scope>
    <scope>VARIANT TRP-399</scope>
</reference>
<reference key="2">
    <citation type="journal article" date="1988" name="J. Biol. Chem.">
        <title>Molecular cloning and primary structure of human chromogranin A (secretory protein I) cDNA.</title>
        <authorList>
            <person name="Helman L.J."/>
            <person name="Ahn T.G."/>
            <person name="Levine M.A."/>
            <person name="Allison A."/>
            <person name="Cohen P.S."/>
            <person name="Cooper M.J."/>
            <person name="Cohn D.V."/>
            <person name="Israel M.A."/>
        </authorList>
    </citation>
    <scope>NUCLEOTIDE SEQUENCE [MRNA]</scope>
</reference>
<reference key="3">
    <citation type="journal article" date="1994" name="J. Biol. Chem.">
        <title>Human chromogranin A gene. Molecular cloning, structural analysis, and neuroendocrine cell-specific expression.</title>
        <authorList>
            <person name="Mouland A.J."/>
            <person name="Bevan S."/>
            <person name="White J.H."/>
            <person name="Hendy G.N."/>
        </authorList>
    </citation>
    <scope>NUCLEOTIDE SEQUENCE [GENOMIC DNA]</scope>
    <scope>VARIANT TRP-399</scope>
    <source>
        <tissue>Liver</tissue>
    </source>
</reference>
<reference key="4">
    <citation type="submission" date="1999-07" db="EMBL/GenBank/DDBJ databases">
        <authorList>
            <person name="Mouland A.J."/>
            <person name="Bevan S."/>
            <person name="White J.H."/>
            <person name="Hendy G.N."/>
        </authorList>
    </citation>
    <scope>SEQUENCE REVISION TO 384-397</scope>
</reference>
<reference key="5">
    <citation type="submission" date="2003-05" db="EMBL/GenBank/DDBJ databases">
        <title>Cloning of human full-length CDSs in BD Creator(TM) system donor vector.</title>
        <authorList>
            <person name="Kalnine N."/>
            <person name="Chen X."/>
            <person name="Rolfs A."/>
            <person name="Halleck A."/>
            <person name="Hines L."/>
            <person name="Eisenstein S."/>
            <person name="Koundinya M."/>
            <person name="Raphael J."/>
            <person name="Moreira D."/>
            <person name="Kelley T."/>
            <person name="LaBaer J."/>
            <person name="Lin Y."/>
            <person name="Phelan M."/>
            <person name="Farmer A."/>
        </authorList>
    </citation>
    <scope>NUCLEOTIDE SEQUENCE [LARGE SCALE MRNA]</scope>
</reference>
<reference key="6">
    <citation type="journal article" date="2004" name="Nat. Genet.">
        <title>Complete sequencing and characterization of 21,243 full-length human cDNAs.</title>
        <authorList>
            <person name="Ota T."/>
            <person name="Suzuki Y."/>
            <person name="Nishikawa T."/>
            <person name="Otsuki T."/>
            <person name="Sugiyama T."/>
            <person name="Irie R."/>
            <person name="Wakamatsu A."/>
            <person name="Hayashi K."/>
            <person name="Sato H."/>
            <person name="Nagai K."/>
            <person name="Kimura K."/>
            <person name="Makita H."/>
            <person name="Sekine M."/>
            <person name="Obayashi M."/>
            <person name="Nishi T."/>
            <person name="Shibahara T."/>
            <person name="Tanaka T."/>
            <person name="Ishii S."/>
            <person name="Yamamoto J."/>
            <person name="Saito K."/>
            <person name="Kawai Y."/>
            <person name="Isono Y."/>
            <person name="Nakamura Y."/>
            <person name="Nagahari K."/>
            <person name="Murakami K."/>
            <person name="Yasuda T."/>
            <person name="Iwayanagi T."/>
            <person name="Wagatsuma M."/>
            <person name="Shiratori A."/>
            <person name="Sudo H."/>
            <person name="Hosoiri T."/>
            <person name="Kaku Y."/>
            <person name="Kodaira H."/>
            <person name="Kondo H."/>
            <person name="Sugawara M."/>
            <person name="Takahashi M."/>
            <person name="Kanda K."/>
            <person name="Yokoi T."/>
            <person name="Furuya T."/>
            <person name="Kikkawa E."/>
            <person name="Omura Y."/>
            <person name="Abe K."/>
            <person name="Kamihara K."/>
            <person name="Katsuta N."/>
            <person name="Sato K."/>
            <person name="Tanikawa M."/>
            <person name="Yamazaki M."/>
            <person name="Ninomiya K."/>
            <person name="Ishibashi T."/>
            <person name="Yamashita H."/>
            <person name="Murakawa K."/>
            <person name="Fujimori K."/>
            <person name="Tanai H."/>
            <person name="Kimata M."/>
            <person name="Watanabe M."/>
            <person name="Hiraoka S."/>
            <person name="Chiba Y."/>
            <person name="Ishida S."/>
            <person name="Ono Y."/>
            <person name="Takiguchi S."/>
            <person name="Watanabe S."/>
            <person name="Yosida M."/>
            <person name="Hotuta T."/>
            <person name="Kusano J."/>
            <person name="Kanehori K."/>
            <person name="Takahashi-Fujii A."/>
            <person name="Hara H."/>
            <person name="Tanase T.-O."/>
            <person name="Nomura Y."/>
            <person name="Togiya S."/>
            <person name="Komai F."/>
            <person name="Hara R."/>
            <person name="Takeuchi K."/>
            <person name="Arita M."/>
            <person name="Imose N."/>
            <person name="Musashino K."/>
            <person name="Yuuki H."/>
            <person name="Oshima A."/>
            <person name="Sasaki N."/>
            <person name="Aotsuka S."/>
            <person name="Yoshikawa Y."/>
            <person name="Matsunawa H."/>
            <person name="Ichihara T."/>
            <person name="Shiohata N."/>
            <person name="Sano S."/>
            <person name="Moriya S."/>
            <person name="Momiyama H."/>
            <person name="Satoh N."/>
            <person name="Takami S."/>
            <person name="Terashima Y."/>
            <person name="Suzuki O."/>
            <person name="Nakagawa S."/>
            <person name="Senoh A."/>
            <person name="Mizoguchi H."/>
            <person name="Goto Y."/>
            <person name="Shimizu F."/>
            <person name="Wakebe H."/>
            <person name="Hishigaki H."/>
            <person name="Watanabe T."/>
            <person name="Sugiyama A."/>
            <person name="Takemoto M."/>
            <person name="Kawakami B."/>
            <person name="Yamazaki M."/>
            <person name="Watanabe K."/>
            <person name="Kumagai A."/>
            <person name="Itakura S."/>
            <person name="Fukuzumi Y."/>
            <person name="Fujimori Y."/>
            <person name="Komiyama M."/>
            <person name="Tashiro H."/>
            <person name="Tanigami A."/>
            <person name="Fujiwara T."/>
            <person name="Ono T."/>
            <person name="Yamada K."/>
            <person name="Fujii Y."/>
            <person name="Ozaki K."/>
            <person name="Hirao M."/>
            <person name="Ohmori Y."/>
            <person name="Kawabata A."/>
            <person name="Hikiji T."/>
            <person name="Kobatake N."/>
            <person name="Inagaki H."/>
            <person name="Ikema Y."/>
            <person name="Okamoto S."/>
            <person name="Okitani R."/>
            <person name="Kawakami T."/>
            <person name="Noguchi S."/>
            <person name="Itoh T."/>
            <person name="Shigeta K."/>
            <person name="Senba T."/>
            <person name="Matsumura K."/>
            <person name="Nakajima Y."/>
            <person name="Mizuno T."/>
            <person name="Morinaga M."/>
            <person name="Sasaki M."/>
            <person name="Togashi T."/>
            <person name="Oyama M."/>
            <person name="Hata H."/>
            <person name="Watanabe M."/>
            <person name="Komatsu T."/>
            <person name="Mizushima-Sugano J."/>
            <person name="Satoh T."/>
            <person name="Shirai Y."/>
            <person name="Takahashi Y."/>
            <person name="Nakagawa K."/>
            <person name="Okumura K."/>
            <person name="Nagase T."/>
            <person name="Nomura N."/>
            <person name="Kikuchi H."/>
            <person name="Masuho Y."/>
            <person name="Yamashita R."/>
            <person name="Nakai K."/>
            <person name="Yada T."/>
            <person name="Nakamura Y."/>
            <person name="Ohara O."/>
            <person name="Isogai T."/>
            <person name="Sugano S."/>
        </authorList>
    </citation>
    <scope>NUCLEOTIDE SEQUENCE [LARGE SCALE MRNA]</scope>
    <scope>VARIANT TRP-399</scope>
    <source>
        <tissue>Stomach</tissue>
    </source>
</reference>
<reference key="7">
    <citation type="submission" date="2005-04" db="EMBL/GenBank/DDBJ databases">
        <authorList>
            <person name="Totoki Y."/>
            <person name="Toyoda A."/>
            <person name="Takeda T."/>
            <person name="Sakaki Y."/>
            <person name="Tanaka A."/>
            <person name="Yokoyama S."/>
        </authorList>
    </citation>
    <scope>NUCLEOTIDE SEQUENCE [LARGE SCALE MRNA]</scope>
    <scope>VARIANT ASP-264</scope>
    <source>
        <tissue>Gastric mucosa</tissue>
    </source>
</reference>
<reference key="8">
    <citation type="journal article" date="2003" name="Nature">
        <title>The DNA sequence and analysis of human chromosome 14.</title>
        <authorList>
            <person name="Heilig R."/>
            <person name="Eckenberg R."/>
            <person name="Petit J.-L."/>
            <person name="Fonknechten N."/>
            <person name="Da Silva C."/>
            <person name="Cattolico L."/>
            <person name="Levy M."/>
            <person name="Barbe V."/>
            <person name="De Berardinis V."/>
            <person name="Ureta-Vidal A."/>
            <person name="Pelletier E."/>
            <person name="Vico V."/>
            <person name="Anthouard V."/>
            <person name="Rowen L."/>
            <person name="Madan A."/>
            <person name="Qin S."/>
            <person name="Sun H."/>
            <person name="Du H."/>
            <person name="Pepin K."/>
            <person name="Artiguenave F."/>
            <person name="Robert C."/>
            <person name="Cruaud C."/>
            <person name="Bruels T."/>
            <person name="Jaillon O."/>
            <person name="Friedlander L."/>
            <person name="Samson G."/>
            <person name="Brottier P."/>
            <person name="Cure S."/>
            <person name="Segurens B."/>
            <person name="Aniere F."/>
            <person name="Samain S."/>
            <person name="Crespeau H."/>
            <person name="Abbasi N."/>
            <person name="Aiach N."/>
            <person name="Boscus D."/>
            <person name="Dickhoff R."/>
            <person name="Dors M."/>
            <person name="Dubois I."/>
            <person name="Friedman C."/>
            <person name="Gouyvenoux M."/>
            <person name="James R."/>
            <person name="Madan A."/>
            <person name="Mairey-Estrada B."/>
            <person name="Mangenot S."/>
            <person name="Martins N."/>
            <person name="Menard M."/>
            <person name="Oztas S."/>
            <person name="Ratcliffe A."/>
            <person name="Shaffer T."/>
            <person name="Trask B."/>
            <person name="Vacherie B."/>
            <person name="Bellemere C."/>
            <person name="Belser C."/>
            <person name="Besnard-Gonnet M."/>
            <person name="Bartol-Mavel D."/>
            <person name="Boutard M."/>
            <person name="Briez-Silla S."/>
            <person name="Combette S."/>
            <person name="Dufosse-Laurent V."/>
            <person name="Ferron C."/>
            <person name="Lechaplais C."/>
            <person name="Louesse C."/>
            <person name="Muselet D."/>
            <person name="Magdelenat G."/>
            <person name="Pateau E."/>
            <person name="Petit E."/>
            <person name="Sirvain-Trukniewicz P."/>
            <person name="Trybou A."/>
            <person name="Vega-Czarny N."/>
            <person name="Bataille E."/>
            <person name="Bluet E."/>
            <person name="Bordelais I."/>
            <person name="Dubois M."/>
            <person name="Dumont C."/>
            <person name="Guerin T."/>
            <person name="Haffray S."/>
            <person name="Hammadi R."/>
            <person name="Muanga J."/>
            <person name="Pellouin V."/>
            <person name="Robert D."/>
            <person name="Wunderle E."/>
            <person name="Gauguet G."/>
            <person name="Roy A."/>
            <person name="Sainte-Marthe L."/>
            <person name="Verdier J."/>
            <person name="Verdier-Discala C."/>
            <person name="Hillier L.W."/>
            <person name="Fulton L."/>
            <person name="McPherson J."/>
            <person name="Matsuda F."/>
            <person name="Wilson R."/>
            <person name="Scarpelli C."/>
            <person name="Gyapay G."/>
            <person name="Wincker P."/>
            <person name="Saurin W."/>
            <person name="Quetier F."/>
            <person name="Waterston R."/>
            <person name="Hood L."/>
            <person name="Weissenbach J."/>
        </authorList>
    </citation>
    <scope>NUCLEOTIDE SEQUENCE [LARGE SCALE GENOMIC DNA]</scope>
</reference>
<reference key="9">
    <citation type="submission" date="2005-07" db="EMBL/GenBank/DDBJ databases">
        <authorList>
            <person name="Mural R.J."/>
            <person name="Istrail S."/>
            <person name="Sutton G.G."/>
            <person name="Florea L."/>
            <person name="Halpern A.L."/>
            <person name="Mobarry C.M."/>
            <person name="Lippert R."/>
            <person name="Walenz B."/>
            <person name="Shatkay H."/>
            <person name="Dew I."/>
            <person name="Miller J.R."/>
            <person name="Flanigan M.J."/>
            <person name="Edwards N.J."/>
            <person name="Bolanos R."/>
            <person name="Fasulo D."/>
            <person name="Halldorsson B.V."/>
            <person name="Hannenhalli S."/>
            <person name="Turner R."/>
            <person name="Yooseph S."/>
            <person name="Lu F."/>
            <person name="Nusskern D.R."/>
            <person name="Shue B.C."/>
            <person name="Zheng X.H."/>
            <person name="Zhong F."/>
            <person name="Delcher A.L."/>
            <person name="Huson D.H."/>
            <person name="Kravitz S.A."/>
            <person name="Mouchard L."/>
            <person name="Reinert K."/>
            <person name="Remington K.A."/>
            <person name="Clark A.G."/>
            <person name="Waterman M.S."/>
            <person name="Eichler E.E."/>
            <person name="Adams M.D."/>
            <person name="Hunkapiller M.W."/>
            <person name="Myers E.W."/>
            <person name="Venter J.C."/>
        </authorList>
    </citation>
    <scope>NUCLEOTIDE SEQUENCE [LARGE SCALE GENOMIC DNA]</scope>
</reference>
<reference key="10">
    <citation type="journal article" date="2004" name="Genome Res.">
        <title>The status, quality, and expansion of the NIH full-length cDNA project: the Mammalian Gene Collection (MGC).</title>
        <authorList>
            <consortium name="The MGC Project Team"/>
        </authorList>
    </citation>
    <scope>NUCLEOTIDE SEQUENCE [LARGE SCALE MRNA]</scope>
    <source>
        <tissue>Brain</tissue>
    </source>
</reference>
<reference key="11">
    <citation type="journal article" date="1986" name="Regul. Pept.">
        <title>Chromogranin from normal human adrenal glands: purification by monoclonal antibody affinity chromatography and partial N-terminal amino acid sequence.</title>
        <authorList>
            <person name="Wilson B.S."/>
            <person name="Phan S.H."/>
            <person name="Lloyd R.V."/>
        </authorList>
    </citation>
    <scope>PROTEIN SEQUENCE OF 19-46</scope>
    <source>
        <tissue>Adrenal gland</tissue>
    </source>
</reference>
<reference key="12">
    <citation type="journal article" date="1990" name="Eur. J. Biochem.">
        <title>Isolation and characterization of a tumor-derived human protein related to chromogranin A and its in vitro conversion to human pancreastatin-48.</title>
        <authorList>
            <person name="Tamamura H."/>
            <person name="Ohta M."/>
            <person name="Yoshizawa K."/>
            <person name="Ono Y."/>
            <person name="Funakoshi A."/>
            <person name="Miyasaka K."/>
            <person name="Tateishi K."/>
            <person name="Jimi A."/>
            <person name="Yajima H."/>
            <person name="Fujii N."/>
            <person name="Funakoshi S."/>
        </authorList>
    </citation>
    <scope>PROTEIN SEQUENCE OF 134-319</scope>
    <scope>AMIDATION AT GLY-319</scope>
    <source>
        <tissue>Pancreas</tissue>
    </source>
</reference>
<reference key="13">
    <citation type="journal article" date="1988" name="FEBS Lett.">
        <title>Isolation of human pancreastatin fragment containing the active sequence from a glucagonoma.</title>
        <authorList>
            <person name="Sekiya K."/>
            <person name="Ghatei M.A."/>
            <person name="Minamino N."/>
            <person name="Bretherton-Watt D."/>
            <person name="Matsuo H."/>
            <person name="Bloom S.R."/>
        </authorList>
    </citation>
    <scope>PROTEIN SEQUENCE OF 291-319</scope>
    <scope>AMIDATION AT GLY-319</scope>
    <source>
        <tissue>Pancreas</tissue>
    </source>
</reference>
<reference key="14">
    <citation type="journal article" date="1992" name="FEBS Lett.">
        <title>Isolation and primary structure of a novel chromogranin A-derived peptide, WE-14, from a human midgut carcinoid tumour.</title>
        <authorList>
            <person name="Curry W.J."/>
            <person name="Shaw C."/>
            <person name="Johnston C.F."/>
            <person name="Thim L."/>
            <person name="Buchanan K.D."/>
        </authorList>
    </citation>
    <scope>PROTEIN SEQUENCE OF 342-355</scope>
</reference>
<reference key="15">
    <citation type="journal article" date="2002" name="Proteomics">
        <title>The spectrum of endogenous human chromogranin A-derived peptides identified using a modified proteomic strategy.</title>
        <authorList>
            <person name="Orr D.F."/>
            <person name="Chen T."/>
            <person name="Johnsen A.H."/>
            <person name="Chalk R."/>
            <person name="Buchanan K.D."/>
            <person name="Sloan J.M."/>
            <person name="Rao P."/>
            <person name="Shaw C."/>
        </authorList>
    </citation>
    <scope>PROTEIN SEQUENCE OF DERIVED PEPTIDES</scope>
    <scope>AMIDATION AT ARG-456 (PEPTIDE GR-44 AND PEPTIDE ER-37)</scope>
</reference>
<reference key="16">
    <citation type="journal article" date="1994" name="Neuroscience">
        <title>Molecular characterization of immunoreactivities of peptides derived from chromogranin A (GE-25) and from secretogranin II (secretoneurin) in human and bovine cerebrospinal fluid.</title>
        <authorList>
            <person name="Kirchmair R."/>
            <person name="Benzer A."/>
            <person name="Troger J."/>
            <person name="Miller C."/>
            <person name="Marksteiner J."/>
            <person name="Saria A."/>
            <person name="Gasser R.W."/>
            <person name="Hogue-Angeletti R."/>
            <person name="Fischer-Colbrie R."/>
            <person name="Winkler H."/>
        </authorList>
    </citation>
    <scope>CHARACTERIZATION OF GE-25</scope>
    <scope>TISSUE SPECIFICITY</scope>
</reference>
<reference key="17">
    <citation type="journal article" date="1998" name="J. Biol. Chem.">
        <title>Phosphorylation and O-glycosylation sites of human chromogranin A (CGA79-439) from urine of patients with carcinoid tumors.</title>
        <authorList>
            <person name="Gadroy P."/>
            <person name="Stridsberg M."/>
            <person name="Capon C."/>
            <person name="Michalski J.-C."/>
            <person name="Strub J.-M."/>
            <person name="van Dorsselaer A."/>
            <person name="Aunis D."/>
            <person name="Metz-Boutigue M.-H."/>
        </authorList>
    </citation>
    <scope>GLYCOSYLATION AT THR-181; THR-183 AND THR-251</scope>
    <scope>PHOSPHORYLATION AT SER-218; SER-270 AND SER-333</scope>
</reference>
<reference key="18">
    <citation type="journal article" date="2000" name="J. Biol. Chem.">
        <title>Formation of the catecholamine release-inhibitory peptide catestatin from chromogranin A. Determination of proteolytic cleavage sites in hormone storage granules.</title>
        <authorList>
            <person name="Taylor C.V."/>
            <person name="Taupenot L."/>
            <person name="Mahata S.K."/>
            <person name="Mahata M."/>
            <person name="Wu H."/>
            <person name="Yasothornsrikul S."/>
            <person name="Toneff T."/>
            <person name="Caporale C."/>
            <person name="Jiang Q."/>
            <person name="Parmer R.J."/>
            <person name="Hook V.Y."/>
            <person name="O'Connor D.T."/>
        </authorList>
    </citation>
    <scope>MASS SPECTROMETRY</scope>
    <scope>PROTEOLYTIC PROCESSING</scope>
    <scope>OXIDATION AT MET-372</scope>
</reference>
<reference key="19">
    <citation type="journal article" date="2004" name="Proteomics">
        <title>Identification and characterization of phosphorylated proteins in the human pituitary.</title>
        <authorList>
            <person name="Giorgianni F."/>
            <person name="Beranova-Giorgianni S."/>
            <person name="Desiderio D.M."/>
        </authorList>
    </citation>
    <scope>PHOSPHORYLATION AT SER-322</scope>
    <source>
        <tissue>Pituitary</tissue>
    </source>
</reference>
<reference key="20">
    <citation type="journal article" date="2005" name="Cell. Mol. Life Sci.">
        <title>New antimicrobial activity for the catecholamine release-inhibitory peptide from chromogranin A.</title>
        <authorList>
            <person name="Briolat J."/>
            <person name="Wu S.D."/>
            <person name="Mahata S.K."/>
            <person name="Gonthier B."/>
            <person name="Bagnard D."/>
            <person name="Chasserot-Golaz S."/>
            <person name="Helle K.B."/>
            <person name="Aunis D."/>
            <person name="Metz-Boutigue M.H."/>
        </authorList>
    </citation>
    <scope>FUNCTION (CATESTATIN)</scope>
</reference>
<reference key="21">
    <citation type="journal article" date="2006" name="Pituitary">
        <title>Phosphoproteomic analysis of the human pituitary.</title>
        <authorList>
            <person name="Beranova-Giorgianni S."/>
            <person name="Zhao Y."/>
            <person name="Desiderio D.M."/>
            <person name="Giorgianni F."/>
        </authorList>
    </citation>
    <scope>PHOSPHORYLATION [LARGE SCALE ANALYSIS] AT SER-203; SER-300; SER-322 AND SER-402</scope>
    <scope>IDENTIFICATION BY MASS SPECTROMETRY [LARGE SCALE ANALYSIS]</scope>
    <source>
        <tissue>Pituitary</tissue>
    </source>
</reference>
<reference key="22">
    <citation type="journal article" date="2008" name="Cardiovasc. Res.">
        <title>Catestatin is a novel endogenous peptide that regulates cardiac function and blood pressure.</title>
        <authorList>
            <person name="Mahapatra N.R."/>
        </authorList>
    </citation>
    <scope>REVIEW</scope>
</reference>
<reference key="23">
    <citation type="journal article" date="2009" name="Nat. Methods">
        <title>Enrichment of glycopeptides for glycan structure and attachment site identification.</title>
        <authorList>
            <person name="Nilsson J."/>
            <person name="Rueetschi U."/>
            <person name="Halim A."/>
            <person name="Hesse C."/>
            <person name="Carlsohn E."/>
            <person name="Brinkmalm G."/>
            <person name="Larson G."/>
        </authorList>
    </citation>
    <scope>GLYCOSYLATION [LARGE SCALE ANALYSIS]</scope>
    <scope>STRUCTURE OF CARBOHYDRATES</scope>
    <source>
        <tissue>Cerebrospinal fluid</tissue>
    </source>
</reference>
<reference key="24">
    <citation type="journal article" date="2010" name="Regul. Pept.">
        <title>Catestatin: a multifunctional peptide from chromogranin A.</title>
        <authorList>
            <person name="Mahata S.K."/>
            <person name="Mahata M."/>
            <person name="Fung M.M."/>
            <person name="O'Connor D.T."/>
        </authorList>
    </citation>
    <scope>REVIEW</scope>
</reference>
<reference key="25">
    <citation type="journal article" date="2011" name="Immunology">
        <title>Catestatin, a neuroendocrine antimicrobial peptide, induces human mast cell migration, degranulation and production of cytokines and chemokines.</title>
        <authorList>
            <person name="Aung G."/>
            <person name="Niyonsaba F."/>
            <person name="Ushio H."/>
            <person name="Kajiwara N."/>
            <person name="Saito H."/>
            <person name="Ikeda S."/>
            <person name="Ogawa H."/>
            <person name="Okumura K."/>
        </authorList>
    </citation>
    <scope>FUNCTION (CATESTATIN)</scope>
</reference>
<reference key="26">
    <citation type="journal article" date="2013" name="J. Proteome Res.">
        <title>LC-MS/MS characterization of O-glycosylation sites and glycan structures of human cerebrospinal fluid glycoproteins.</title>
        <authorList>
            <person name="Halim A."/>
            <person name="Ruetschi U."/>
            <person name="Larson G."/>
            <person name="Nilsson J."/>
        </authorList>
    </citation>
    <scope>GLYCOSYLATION</scope>
    <scope>IDENTIFICATION BY MASS SPECTROMETRY</scope>
</reference>
<reference key="27">
    <citation type="journal article" date="2014" name="J. Pept. Sci.">
        <title>Antioxidant properties of a human neuropeptide and its protective effect on free radical-induced DNA damage.</title>
        <authorList>
            <person name="Mohseni S."/>
            <person name="Emtenani S."/>
            <person name="Emtenani S."/>
            <person name="Asoodeh A."/>
        </authorList>
    </citation>
    <scope>FUNCTION (CATESTATIN)</scope>
</reference>
<reference key="28">
    <citation type="journal article" date="2014" name="J. Proteomics">
        <title>An enzyme assisted RP-RPLC approach for in-depth analysis of human liver phosphoproteome.</title>
        <authorList>
            <person name="Bian Y."/>
            <person name="Song C."/>
            <person name="Cheng K."/>
            <person name="Dong M."/>
            <person name="Wang F."/>
            <person name="Huang J."/>
            <person name="Sun D."/>
            <person name="Wang L."/>
            <person name="Ye M."/>
            <person name="Zou H."/>
        </authorList>
    </citation>
    <scope>PHOSPHORYLATION [LARGE SCALE ANALYSIS] AT SER-322</scope>
    <scope>IDENTIFICATION BY MASS SPECTROMETRY [LARGE SCALE ANALYSIS]</scope>
    <source>
        <tissue>Liver</tissue>
    </source>
</reference>
<reference key="29">
    <citation type="journal article" date="2015" name="Mol. Cell. Proteomics">
        <title>Identification of chondroitin sulfate linkage region glycopeptides reveals prohormones as a novel class of proteoglycans.</title>
        <authorList>
            <person name="Noborn F."/>
            <person name="Gomez Toledo A."/>
            <person name="Sihlbom C."/>
            <person name="Lengqvist J."/>
            <person name="Fries E."/>
            <person name="Kjellen L."/>
            <person name="Nilsson J."/>
            <person name="Larson G."/>
        </authorList>
    </citation>
    <scope>SUBUNIT</scope>
    <scope>SUBCELLULAR LOCATION</scope>
    <scope>TISSUE SPECIFICITY</scope>
    <scope>GLYCOSYLATION AT SER-424</scope>
</reference>
<reference key="30">
    <citation type="journal article" date="2023" name="Mol. Cell. Proteomics">
        <title>Mapping the Human Chondroitin Sulfate Glycoproteome Reveals an Unexpected Correlation Between Glycan Sulfation and Attachment Site Characteristics.</title>
        <authorList>
            <person name="Noborn F."/>
            <person name="Nilsson J."/>
            <person name="Sihlbom C."/>
            <person name="Nikpour M."/>
            <person name="Kjellen L."/>
            <person name="Larson G."/>
        </authorList>
    </citation>
    <scope>SUBCELLULAR LOCATION</scope>
    <scope>TISSUE SPECIFICITY</scope>
    <scope>GLYCOSYLATION AT SER-424</scope>
</reference>
<reference key="31">
    <citation type="journal article" date="2004" name="Regul. Pept.">
        <title>Conformational preferences and activities of peptides from the catecholamine release-inhibitory (catestatin) region of chromogranin A.</title>
        <authorList>
            <person name="Preece N.E."/>
            <person name="Nguyen M."/>
            <person name="Mahata M."/>
            <person name="Mahata S.K."/>
            <person name="Mahapatra N.R."/>
            <person name="Tsigelny I."/>
            <person name="O'Connor D.T."/>
        </authorList>
    </citation>
    <scope>STRUCTURE BY NMR OF 370-390</scope>
</reference>
<reference key="32">
    <citation type="journal article" date="2004" name="Am. J. Hum. Genet.">
        <title>Both rare and common polymorphisms contribute functional variation at CHGA, a regulator of catecholamine physiology.</title>
        <authorList>
            <person name="Wen G."/>
            <person name="Mahata S.K."/>
            <person name="Cadman P."/>
            <person name="Mahata M."/>
            <person name="Ghosh S."/>
            <person name="Mahapatra N.R."/>
            <person name="Rao F."/>
            <person name="Stridsberg M."/>
            <person name="Smith D.W."/>
            <person name="Mahboubi P."/>
            <person name="Schork N.J."/>
            <person name="O'Connor D.T."/>
            <person name="Hamilton B.A."/>
        </authorList>
    </citation>
    <scope>VARIANTS SER-382 AND LEU-388</scope>
</reference>
<reference key="33">
    <citation type="journal article" date="2004" name="Mol. Pharmacol.">
        <title>The catecholamine release-inhibitory 'catestatin' fragment of chromogranin a: naturally occurring human variants with different potencies for multiple chromaffin cell nicotinic cholinergic responses.</title>
        <authorList>
            <person name="Mahata S.K."/>
            <person name="Mahata M."/>
            <person name="Wen G."/>
            <person name="Wong W.B."/>
            <person name="Mahapatra N.R."/>
            <person name="Hamilton B.A."/>
            <person name="O'Connor D.T."/>
        </authorList>
    </citation>
    <scope>VARIANTS SER-382; LEU-388 AND GLN-392</scope>
    <scope>CHARACTERIZATION OF VARIANTS SER-382; LEU-388 AND GLN-392</scope>
    <scope>FUNCTION (CATESTATIN)</scope>
</reference>
<reference key="34">
    <citation type="journal article" date="2007" name="Circulation">
        <title>Catecholamine release-inhibitory peptide catestatin (chromogranin A(352-372)): naturally occurring amino acid variant Gly364Ser causes profound changes in human autonomic activity and alters risk for hypertension.</title>
        <authorList>
            <person name="Rao F."/>
            <person name="Wen G."/>
            <person name="Gayen J.R."/>
            <person name="Das M."/>
            <person name="Vaingankar S.M."/>
            <person name="Rana B.K."/>
            <person name="Mahata M."/>
            <person name="Kennedy B.P."/>
            <person name="Salem R.M."/>
            <person name="Stridsberg M."/>
            <person name="Abel K."/>
            <person name="Smith D.W."/>
            <person name="Eskin E."/>
            <person name="Schork N.J."/>
            <person name="Hamilton B.A."/>
            <person name="Ziegler M.G."/>
            <person name="Mahata S.K."/>
            <person name="O'Connor D.T."/>
        </authorList>
    </citation>
    <scope>VARIANT SER-382</scope>
    <scope>CHARACTERIZATION OF VARIANT SER-382</scope>
</reference>
<reference key="35">
    <citation type="journal article" date="2008" name="Endocrinology">
        <title>Proteolytic cleavage of human chromogranin a containing naturally occurring catestatin variants: differential processing at catestatin region by plasmin.</title>
        <authorList>
            <person name="Biswas N."/>
            <person name="Vaingankar S.M."/>
            <person name="Mahata M."/>
            <person name="Das M."/>
            <person name="Gayen J.R."/>
            <person name="Taupenot L."/>
            <person name="Torpey J.W."/>
            <person name="O'Connor D.T."/>
            <person name="Mahata S.K."/>
        </authorList>
    </citation>
    <scope>VARIANTS SER-382; LEU-388 AND GLN-392</scope>
    <scope>CHARACTERIZATION OF VARIANTS SER-382; LEU-388 AND GLN-392</scope>
    <scope>PROTEOLYTIC PROCESSING</scope>
</reference>
<organism>
    <name type="scientific">Homo sapiens</name>
    <name type="common">Human</name>
    <dbReference type="NCBI Taxonomy" id="9606"/>
    <lineage>
        <taxon>Eukaryota</taxon>
        <taxon>Metazoa</taxon>
        <taxon>Chordata</taxon>
        <taxon>Craniata</taxon>
        <taxon>Vertebrata</taxon>
        <taxon>Euteleostomi</taxon>
        <taxon>Mammalia</taxon>
        <taxon>Eutheria</taxon>
        <taxon>Euarchontoglires</taxon>
        <taxon>Primates</taxon>
        <taxon>Haplorrhini</taxon>
        <taxon>Catarrhini</taxon>
        <taxon>Hominidae</taxon>
        <taxon>Homo</taxon>
    </lineage>
</organism>
<proteinExistence type="evidence at protein level"/>
<dbReference type="EMBL" id="J03483">
    <property type="protein sequence ID" value="AAA52017.1"/>
    <property type="molecule type" value="mRNA"/>
</dbReference>
<dbReference type="EMBL" id="J03915">
    <property type="protein sequence ID" value="AAA52018.1"/>
    <property type="molecule type" value="mRNA"/>
</dbReference>
<dbReference type="EMBL" id="U03749">
    <property type="protein sequence ID" value="AAB53685.1"/>
    <property type="molecule type" value="Genomic_DNA"/>
</dbReference>
<dbReference type="EMBL" id="U03742">
    <property type="protein sequence ID" value="AAB53685.1"/>
    <property type="status" value="JOINED"/>
    <property type="molecule type" value="Genomic_DNA"/>
</dbReference>
<dbReference type="EMBL" id="U03743">
    <property type="protein sequence ID" value="AAB53685.1"/>
    <property type="status" value="JOINED"/>
    <property type="molecule type" value="Genomic_DNA"/>
</dbReference>
<dbReference type="EMBL" id="U03744">
    <property type="protein sequence ID" value="AAB53685.1"/>
    <property type="status" value="JOINED"/>
    <property type="molecule type" value="Genomic_DNA"/>
</dbReference>
<dbReference type="EMBL" id="U03748">
    <property type="protein sequence ID" value="AAB53685.1"/>
    <property type="status" value="JOINED"/>
    <property type="molecule type" value="Genomic_DNA"/>
</dbReference>
<dbReference type="EMBL" id="U03745">
    <property type="protein sequence ID" value="AAB53685.1"/>
    <property type="status" value="JOINED"/>
    <property type="molecule type" value="Genomic_DNA"/>
</dbReference>
<dbReference type="EMBL" id="U03746">
    <property type="protein sequence ID" value="AAB53685.1"/>
    <property type="status" value="JOINED"/>
    <property type="molecule type" value="Genomic_DNA"/>
</dbReference>
<dbReference type="EMBL" id="U03747">
    <property type="protein sequence ID" value="AAB53685.1"/>
    <property type="status" value="JOINED"/>
    <property type="molecule type" value="Genomic_DNA"/>
</dbReference>
<dbReference type="EMBL" id="BT006869">
    <property type="protein sequence ID" value="AAP35515.1"/>
    <property type="molecule type" value="mRNA"/>
</dbReference>
<dbReference type="EMBL" id="AK223381">
    <property type="protein sequence ID" value="BAD97101.1"/>
    <property type="molecule type" value="mRNA"/>
</dbReference>
<dbReference type="EMBL" id="AL117192">
    <property type="status" value="NOT_ANNOTATED_CDS"/>
    <property type="molecule type" value="Genomic_DNA"/>
</dbReference>
<dbReference type="EMBL" id="AK313757">
    <property type="protein sequence ID" value="BAG36496.1"/>
    <property type="molecule type" value="mRNA"/>
</dbReference>
<dbReference type="EMBL" id="CH471061">
    <property type="protein sequence ID" value="EAW81505.1"/>
    <property type="molecule type" value="Genomic_DNA"/>
</dbReference>
<dbReference type="EMBL" id="BC001059">
    <property type="protein sequence ID" value="AAH01059.1"/>
    <property type="molecule type" value="mRNA"/>
</dbReference>
<dbReference type="EMBL" id="BC006459">
    <property type="protein sequence ID" value="AAH06459.1"/>
    <property type="molecule type" value="mRNA"/>
</dbReference>
<dbReference type="EMBL" id="BC009384">
    <property type="protein sequence ID" value="AAH09384.2"/>
    <property type="molecule type" value="mRNA"/>
</dbReference>
<dbReference type="EMBL" id="BC012755">
    <property type="protein sequence ID" value="AAH12755.2"/>
    <property type="molecule type" value="mRNA"/>
</dbReference>
<dbReference type="CCDS" id="CCDS9906.1"/>
<dbReference type="PIR" id="A54376">
    <property type="entry name" value="A28468"/>
</dbReference>
<dbReference type="RefSeq" id="NP_001266.1">
    <property type="nucleotide sequence ID" value="NM_001275.4"/>
</dbReference>
<dbReference type="RefSeq" id="NP_001288619.1">
    <property type="nucleotide sequence ID" value="NM_001301690.1"/>
</dbReference>
<dbReference type="RefSeq" id="XP_011534672.1">
    <property type="nucleotide sequence ID" value="XM_011536370.3"/>
</dbReference>
<dbReference type="RefSeq" id="XP_054184929.1">
    <property type="nucleotide sequence ID" value="XM_054328954.1"/>
</dbReference>
<dbReference type="RefSeq" id="XP_054231265.1">
    <property type="nucleotide sequence ID" value="XM_054375290.1"/>
</dbReference>
<dbReference type="PDB" id="1LV4">
    <property type="method" value="NMR"/>
    <property type="chains" value="A=370-390"/>
</dbReference>
<dbReference type="PDB" id="6R2X">
    <property type="method" value="NMR"/>
    <property type="chains" value="A=57-81"/>
</dbReference>
<dbReference type="PDBsum" id="1LV4"/>
<dbReference type="PDBsum" id="6R2X"/>
<dbReference type="BMRB" id="P10645"/>
<dbReference type="SMR" id="P10645"/>
<dbReference type="BioGRID" id="107538">
    <property type="interactions" value="18"/>
</dbReference>
<dbReference type="FunCoup" id="P10645">
    <property type="interactions" value="78"/>
</dbReference>
<dbReference type="IntAct" id="P10645">
    <property type="interactions" value="9"/>
</dbReference>
<dbReference type="MINT" id="P10645"/>
<dbReference type="STRING" id="9606.ENSP00000216492"/>
<dbReference type="GlyConnect" id="93">
    <property type="glycosylation" value="4 O-Linked glycans (3 sites)"/>
</dbReference>
<dbReference type="GlyCosmos" id="P10645">
    <property type="glycosylation" value="5 sites, 8 glycans"/>
</dbReference>
<dbReference type="GlyGen" id="P10645">
    <property type="glycosylation" value="6 sites, 8 O-linked glycans (5 sites)"/>
</dbReference>
<dbReference type="iPTMnet" id="P10645"/>
<dbReference type="PhosphoSitePlus" id="P10645"/>
<dbReference type="BioMuta" id="CHGA"/>
<dbReference type="DMDM" id="215274270"/>
<dbReference type="jPOST" id="P10645"/>
<dbReference type="MassIVE" id="P10645"/>
<dbReference type="PaxDb" id="9606-ENSP00000216492"/>
<dbReference type="PeptideAtlas" id="P10645"/>
<dbReference type="ProteomicsDB" id="52635"/>
<dbReference type="TopDownProteomics" id="P10645"/>
<dbReference type="Antibodypedia" id="738">
    <property type="antibodies" value="3071 antibodies from 51 providers"/>
</dbReference>
<dbReference type="CPTC" id="P10645">
    <property type="antibodies" value="3 antibodies"/>
</dbReference>
<dbReference type="DNASU" id="1113"/>
<dbReference type="Ensembl" id="ENST00000216492.10">
    <property type="protein sequence ID" value="ENSP00000216492.5"/>
    <property type="gene ID" value="ENSG00000100604.13"/>
</dbReference>
<dbReference type="Ensembl" id="ENST00000613166.3">
    <property type="protein sequence ID" value="ENSP00000478198.1"/>
    <property type="gene ID" value="ENSG00000276781.3"/>
</dbReference>
<dbReference type="GeneID" id="1113"/>
<dbReference type="KEGG" id="hsa:1113"/>
<dbReference type="MANE-Select" id="ENST00000216492.10">
    <property type="protein sequence ID" value="ENSP00000216492.5"/>
    <property type="RefSeq nucleotide sequence ID" value="NM_001275.4"/>
    <property type="RefSeq protein sequence ID" value="NP_001266.1"/>
</dbReference>
<dbReference type="UCSC" id="uc001ybc.6">
    <property type="organism name" value="human"/>
</dbReference>
<dbReference type="AGR" id="HGNC:1929"/>
<dbReference type="CTD" id="1113"/>
<dbReference type="DisGeNET" id="1113"/>
<dbReference type="GeneCards" id="CHGA"/>
<dbReference type="HGNC" id="HGNC:1929">
    <property type="gene designation" value="CHGA"/>
</dbReference>
<dbReference type="HPA" id="ENSG00000100604">
    <property type="expression patterns" value="Tissue enriched (parathyroid)"/>
</dbReference>
<dbReference type="MIM" id="118910">
    <property type="type" value="gene"/>
</dbReference>
<dbReference type="neXtProt" id="NX_P10645"/>
<dbReference type="OpenTargets" id="ENSG00000100604"/>
<dbReference type="PharmGKB" id="PA26461"/>
<dbReference type="VEuPathDB" id="HostDB:ENSG00000100604"/>
<dbReference type="eggNOG" id="ENOG502RZBD">
    <property type="taxonomic scope" value="Eukaryota"/>
</dbReference>
<dbReference type="GeneTree" id="ENSGT00940000154206"/>
<dbReference type="InParanoid" id="P10645"/>
<dbReference type="OMA" id="KVMTCIA"/>
<dbReference type="OrthoDB" id="9948620at2759"/>
<dbReference type="PAN-GO" id="P10645">
    <property type="GO annotations" value="6 GO annotations based on evolutionary models"/>
</dbReference>
<dbReference type="PhylomeDB" id="P10645"/>
<dbReference type="TreeFam" id="TF336596"/>
<dbReference type="PathwayCommons" id="P10645"/>
<dbReference type="Reactome" id="R-HSA-6803157">
    <property type="pathway name" value="Antimicrobial peptides"/>
</dbReference>
<dbReference type="SignaLink" id="P10645"/>
<dbReference type="SIGNOR" id="P10645"/>
<dbReference type="BioGRID-ORCS" id="1113">
    <property type="hits" value="178 hits in 1147 CRISPR screens"/>
</dbReference>
<dbReference type="CD-CODE" id="2ECFBB9C">
    <property type="entry name" value="Chromogranin condensates"/>
</dbReference>
<dbReference type="ChiTaRS" id="CHGA">
    <property type="organism name" value="human"/>
</dbReference>
<dbReference type="EvolutionaryTrace" id="P10645"/>
<dbReference type="GeneWiki" id="Chromogranin_A"/>
<dbReference type="GenomeRNAi" id="1113"/>
<dbReference type="Pharos" id="P10645">
    <property type="development level" value="Tbio"/>
</dbReference>
<dbReference type="PRO" id="PR:P10645"/>
<dbReference type="Proteomes" id="UP000005640">
    <property type="component" value="Chromosome 14"/>
</dbReference>
<dbReference type="RNAct" id="P10645">
    <property type="molecule type" value="protein"/>
</dbReference>
<dbReference type="Bgee" id="ENSG00000100604">
    <property type="expression patterns" value="Expressed in islet of Langerhans and 98 other cell types or tissues"/>
</dbReference>
<dbReference type="ExpressionAtlas" id="P10645">
    <property type="expression patterns" value="baseline and differential"/>
</dbReference>
<dbReference type="GO" id="GO:0042583">
    <property type="term" value="C:chromaffin granule"/>
    <property type="evidence" value="ECO:0000250"/>
    <property type="project" value="BHF-UCL"/>
</dbReference>
<dbReference type="GO" id="GO:0005576">
    <property type="term" value="C:extracellular region"/>
    <property type="evidence" value="ECO:0000304"/>
    <property type="project" value="Reactome"/>
</dbReference>
<dbReference type="GO" id="GO:0005615">
    <property type="term" value="C:extracellular space"/>
    <property type="evidence" value="ECO:0000250"/>
    <property type="project" value="BHF-UCL"/>
</dbReference>
<dbReference type="GO" id="GO:0098992">
    <property type="term" value="C:neuronal dense core vesicle"/>
    <property type="evidence" value="ECO:0000250"/>
    <property type="project" value="UniProtKB"/>
</dbReference>
<dbReference type="GO" id="GO:0048471">
    <property type="term" value="C:perinuclear region of cytoplasm"/>
    <property type="evidence" value="ECO:0000314"/>
    <property type="project" value="UniProtKB"/>
</dbReference>
<dbReference type="GO" id="GO:0030141">
    <property type="term" value="C:secretory granule"/>
    <property type="evidence" value="ECO:0000250"/>
    <property type="project" value="UniProtKB"/>
</dbReference>
<dbReference type="GO" id="GO:0030133">
    <property type="term" value="C:transport vesicle"/>
    <property type="evidence" value="ECO:0007669"/>
    <property type="project" value="UniProtKB-SubCell"/>
</dbReference>
<dbReference type="GO" id="GO:0071880">
    <property type="term" value="P:adenylate cyclase-activating adrenergic receptor signaling pathway"/>
    <property type="evidence" value="ECO:0000304"/>
    <property type="project" value="BHF-UCL"/>
</dbReference>
<dbReference type="GO" id="GO:0042742">
    <property type="term" value="P:defense response to bacterium"/>
    <property type="evidence" value="ECO:0000318"/>
    <property type="project" value="GO_Central"/>
</dbReference>
<dbReference type="GO" id="GO:0050832">
    <property type="term" value="P:defense response to fungus"/>
    <property type="evidence" value="ECO:0007669"/>
    <property type="project" value="UniProtKB-KW"/>
</dbReference>
<dbReference type="GO" id="GO:0050829">
    <property type="term" value="P:defense response to Gram-negative bacterium"/>
    <property type="evidence" value="ECO:0000314"/>
    <property type="project" value="UniProtKB"/>
</dbReference>
<dbReference type="GO" id="GO:0050830">
    <property type="term" value="P:defense response to Gram-positive bacterium"/>
    <property type="evidence" value="ECO:0000314"/>
    <property type="project" value="UniProtKB"/>
</dbReference>
<dbReference type="GO" id="GO:0045087">
    <property type="term" value="P:innate immune response"/>
    <property type="evidence" value="ECO:0000303"/>
    <property type="project" value="UniProtKB"/>
</dbReference>
<dbReference type="GO" id="GO:0031640">
    <property type="term" value="P:killing of cells of another organism"/>
    <property type="evidence" value="ECO:0007669"/>
    <property type="project" value="UniProtKB-KW"/>
</dbReference>
<dbReference type="GO" id="GO:0045576">
    <property type="term" value="P:mast cell activation"/>
    <property type="evidence" value="ECO:0000314"/>
    <property type="project" value="UniProtKB"/>
</dbReference>
<dbReference type="GO" id="GO:0002551">
    <property type="term" value="P:mast cell chemotaxis"/>
    <property type="evidence" value="ECO:0000314"/>
    <property type="project" value="UniProtKB"/>
</dbReference>
<dbReference type="GO" id="GO:0043303">
    <property type="term" value="P:mast cell degranulation"/>
    <property type="evidence" value="ECO:0000314"/>
    <property type="project" value="UniProtKB"/>
</dbReference>
<dbReference type="GO" id="GO:0033604">
    <property type="term" value="P:negative regulation of catecholamine secretion"/>
    <property type="evidence" value="ECO:0000314"/>
    <property type="project" value="UniProtKB"/>
</dbReference>
<dbReference type="GO" id="GO:0046676">
    <property type="term" value="P:negative regulation of insulin secretion"/>
    <property type="evidence" value="ECO:0000318"/>
    <property type="project" value="GO_Central"/>
</dbReference>
<dbReference type="GO" id="GO:0060452">
    <property type="term" value="P:positive regulation of cardiac muscle contraction"/>
    <property type="evidence" value="ECO:0000250"/>
    <property type="project" value="BHF-UCL"/>
</dbReference>
<dbReference type="GO" id="GO:2000707">
    <property type="term" value="P:positive regulation of dense core granule biogenesis"/>
    <property type="evidence" value="ECO:0000250"/>
    <property type="project" value="UniProtKB"/>
</dbReference>
<dbReference type="GO" id="GO:1900738">
    <property type="term" value="P:positive regulation of phospholipase C-activating G protein-coupled receptor signaling pathway"/>
    <property type="evidence" value="ECO:0000250"/>
    <property type="project" value="BHF-UCL"/>
</dbReference>
<dbReference type="GO" id="GO:1901899">
    <property type="term" value="P:positive regulation of relaxation of cardiac muscle"/>
    <property type="evidence" value="ECO:0000250"/>
    <property type="project" value="BHF-UCL"/>
</dbReference>
<dbReference type="GO" id="GO:0033366">
    <property type="term" value="P:protein localization to secretory granule"/>
    <property type="evidence" value="ECO:0007669"/>
    <property type="project" value="Ensembl"/>
</dbReference>
<dbReference type="GO" id="GO:0008217">
    <property type="term" value="P:regulation of blood pressure"/>
    <property type="evidence" value="ECO:0000304"/>
    <property type="project" value="ProtInc"/>
</dbReference>
<dbReference type="GO" id="GO:0002026">
    <property type="term" value="P:regulation of the force of heart contraction"/>
    <property type="evidence" value="ECO:0000250"/>
    <property type="project" value="BHF-UCL"/>
</dbReference>
<dbReference type="InterPro" id="IPR001819">
    <property type="entry name" value="Chromogranin_AB"/>
</dbReference>
<dbReference type="InterPro" id="IPR018054">
    <property type="entry name" value="Chromogranin_CS"/>
</dbReference>
<dbReference type="InterPro" id="IPR001990">
    <property type="entry name" value="Granin"/>
</dbReference>
<dbReference type="PANTHER" id="PTHR10583">
    <property type="entry name" value="CHROMOGRANIN"/>
    <property type="match status" value="1"/>
</dbReference>
<dbReference type="PANTHER" id="PTHR10583:SF1">
    <property type="entry name" value="CHROMOGRANIN-A"/>
    <property type="match status" value="1"/>
</dbReference>
<dbReference type="Pfam" id="PF01271">
    <property type="entry name" value="Granin"/>
    <property type="match status" value="2"/>
</dbReference>
<dbReference type="PRINTS" id="PR00659">
    <property type="entry name" value="CHROMOGRANIN"/>
</dbReference>
<dbReference type="PROSITE" id="PS00422">
    <property type="entry name" value="GRANINS_1"/>
    <property type="match status" value="1"/>
</dbReference>
<dbReference type="PROSITE" id="PS00423">
    <property type="entry name" value="GRANINS_2"/>
    <property type="match status" value="1"/>
</dbReference>
<accession>P10645</accession>
<accession>B2R9E9</accession>
<accession>Q53FA8</accession>
<accession>Q6NR84</accession>
<accession>Q96E84</accession>
<accession>Q96GL7</accession>
<accession>Q9BQB5</accession>
<comment type="function">
    <molecule>Pancreastatin</molecule>
    <text>Strongly inhibits glucose induced insulin release from the pancreas.</text>
</comment>
<comment type="function">
    <molecule>Catestatin</molecule>
    <text evidence="10 11 15 19 30">Inhibits catecholamine release from chromaffin cells and noradrenergic neurons by acting as a non-competitive nicotinic cholinergic antagonist (PubMed:15326220). Displays antibacterial activity against Gram-positive bacteria S.aureus and M.luteus, and Gram-negative bacteria E.coli and P.aeruginosa (PubMed:15723172, PubMed:24723458). Can induce mast cell migration, degranulation and production of cytokines and chemokines (PubMed:21214543). Acts as a potent scavenger of free radicals in vitro (PubMed:24723458). May play a role in the regulation of cardiac function and blood pressure (PubMed:18541522).</text>
</comment>
<comment type="function">
    <molecule>Serpinin</molecule>
    <text evidence="3">Regulates granule biogenesis in endocrine cells by up-regulating the transcription of protease nexin 1 (SERPINE2) via a cAMP-PKA-SP1 pathway. This leads to inhibition of granule protein degradation in the Golgi complex which in turn promotes granule formation.</text>
</comment>
<comment type="subunit">
    <text evidence="1 3 20">Self-interacts; self-assembly is promoted in vitro by chondroitin sulfate attachment which occurs at mildly acidic pH conditions (PubMed:25326458). Interacts with SCG3 (By similarity). Interacts with ITPR1 in the secretory granules (By similarity).</text>
</comment>
<comment type="subcellular location">
    <molecule>Serpinin</molecule>
    <subcellularLocation>
        <location evidence="3">Secreted</location>
    </subcellularLocation>
    <subcellularLocation>
        <location evidence="3">Cytoplasmic vesicle</location>
        <location evidence="3">Secretory vesicle</location>
    </subcellularLocation>
    <text evidence="3">Pyroglutaminated serpinin localizes to secretory vesicle.</text>
</comment>
<comment type="subcellular location">
    <subcellularLocation>
        <location evidence="2">Cytoplasmic vesicle</location>
        <location evidence="2">Secretory vesicle</location>
    </subcellularLocation>
    <subcellularLocation>
        <location evidence="2">Cytoplasmic vesicle</location>
        <location evidence="2">Secretory vesicle</location>
        <location evidence="2">Neuronal dense core vesicle</location>
    </subcellularLocation>
    <subcellularLocation>
        <location evidence="20 23">Secreted</location>
    </subcellularLocation>
    <text evidence="2">Associated with the secretory granule membrane through direct interaction to SCG3 that in turn binds to cholesterol-enriched lipid rafts in intragranular conditions. In pituitary gonadotropes, located in large secretory granules.</text>
</comment>
<comment type="tissue specificity">
    <text evidence="20 23">Detected in cerebrospinal fluid (at protein level) (PubMed:25326458). Detected in urine (at protein level) (PubMed:37453717).</text>
</comment>
<comment type="tissue specificity">
    <molecule>GE-25</molecule>
    <text evidence="24">Found in the brain.</text>
</comment>
<comment type="PTM">
    <text>Sulfated on tyrosine residues and/or contains sulfated glycans.</text>
</comment>
<comment type="PTM">
    <text evidence="14 17 20 26">O-glycosylated with core 1 or possibly core 8 glycans (PubMed:19838169, PubMed:23234360, PubMed:9852066). Contains chondroitin sulfate (CS); CS attachment is pH-dependent, being observed at mildly acidic conditions of pH 5 but not at neutral pH, and promotes self-assembly in vitro (PubMed:25326458).</text>
</comment>
<comment type="PTM">
    <text evidence="5 13">Proteolytic processing gives rise to an additional longer form of catestatin (residues 358-390) which displays a less potent catecholamine release-inhibitory activity (PubMed:10781584). Plasmin-mediated proteolytic processing can give rise to additional shorter and longer forms of catestatin peptides (PubMed:17991725).</text>
</comment>
<comment type="miscellaneous">
    <text>Binds calcium with a low-affinity.</text>
</comment>
<comment type="similarity">
    <text evidence="33">Belongs to the chromogranin/secretogranin protein family.</text>
</comment>
<gene>
    <name type="primary">CHGA</name>
</gene>
<name>CMGA_HUMAN</name>